<reference key="1">
    <citation type="journal article" date="2004" name="PLoS Biol.">
        <title>Genomic insights into methanotrophy: the complete genome sequence of Methylococcus capsulatus (Bath).</title>
        <authorList>
            <person name="Ward N.L."/>
            <person name="Larsen O."/>
            <person name="Sakwa J."/>
            <person name="Bruseth L."/>
            <person name="Khouri H.M."/>
            <person name="Durkin A.S."/>
            <person name="Dimitrov G."/>
            <person name="Jiang L."/>
            <person name="Scanlan D."/>
            <person name="Kang K.H."/>
            <person name="Lewis M.R."/>
            <person name="Nelson K.E."/>
            <person name="Methe B.A."/>
            <person name="Wu M."/>
            <person name="Heidelberg J.F."/>
            <person name="Paulsen I.T."/>
            <person name="Fouts D.E."/>
            <person name="Ravel J."/>
            <person name="Tettelin H."/>
            <person name="Ren Q."/>
            <person name="Read T.D."/>
            <person name="DeBoy R.T."/>
            <person name="Seshadri R."/>
            <person name="Salzberg S.L."/>
            <person name="Jensen H.B."/>
            <person name="Birkeland N.K."/>
            <person name="Nelson W.C."/>
            <person name="Dodson R.J."/>
            <person name="Grindhaug S.H."/>
            <person name="Holt I.E."/>
            <person name="Eidhammer I."/>
            <person name="Jonasen I."/>
            <person name="Vanaken S."/>
            <person name="Utterback T.R."/>
            <person name="Feldblyum T.V."/>
            <person name="Fraser C.M."/>
            <person name="Lillehaug J.R."/>
            <person name="Eisen J.A."/>
        </authorList>
    </citation>
    <scope>NUCLEOTIDE SEQUENCE [LARGE SCALE GENOMIC DNA]</scope>
    <source>
        <strain>ATCC 33009 / NCIMB 11132 / Bath</strain>
    </source>
</reference>
<protein>
    <recommendedName>
        <fullName evidence="1">Aminomethyltransferase</fullName>
        <ecNumber evidence="1">2.1.2.10</ecNumber>
    </recommendedName>
    <alternativeName>
        <fullName evidence="1">Glycine cleavage system T protein</fullName>
    </alternativeName>
</protein>
<name>GCST_METCA</name>
<gene>
    <name evidence="1" type="primary">gcvT</name>
    <name type="ordered locus">MCA0350</name>
</gene>
<keyword id="KW-0032">Aminotransferase</keyword>
<keyword id="KW-1185">Reference proteome</keyword>
<keyword id="KW-0808">Transferase</keyword>
<sequence>MGRCTALHEEHLALGARMTEFSGWELPLHYGSQIAEHHAVRRAAGMFDVSHLGVVDVEGLQAAPFLRRVLANDVARLAEPGRMLYGCMLNQDGGIVDDLVVGFIDDRRFRLILNAGTREKDLSWLHRQAAPFSVTVTPRDDLAMIALQGPDSPRIADAVVAAGSSGLKPFTATQRGDRFIARTGYTGEDGFEIILPHAEAGSLWRQLFQAGARPCGLGARDTLRLEAGMRLYGQDMDETVTPLACGLGWTVAWEPEERDFIGRAALERERIGGSPSKFVGLILEEPGILRSGQKVAVANVGEGVVTSGGFSPTLRRSIGLARVPAATGRECRVEIRGSLKRATVVKPRFVRRSTSLIDIC</sequence>
<feature type="chain" id="PRO_0000122570" description="Aminomethyltransferase">
    <location>
        <begin position="1"/>
        <end position="360"/>
    </location>
</feature>
<proteinExistence type="inferred from homology"/>
<comment type="function">
    <text evidence="1">The glycine cleavage system catalyzes the degradation of glycine.</text>
</comment>
<comment type="catalytic activity">
    <reaction evidence="1">
        <text>N(6)-[(R)-S(8)-aminomethyldihydrolipoyl]-L-lysyl-[protein] + (6S)-5,6,7,8-tetrahydrofolate = N(6)-[(R)-dihydrolipoyl]-L-lysyl-[protein] + (6R)-5,10-methylene-5,6,7,8-tetrahydrofolate + NH4(+)</text>
        <dbReference type="Rhea" id="RHEA:16945"/>
        <dbReference type="Rhea" id="RHEA-COMP:10475"/>
        <dbReference type="Rhea" id="RHEA-COMP:10492"/>
        <dbReference type="ChEBI" id="CHEBI:15636"/>
        <dbReference type="ChEBI" id="CHEBI:28938"/>
        <dbReference type="ChEBI" id="CHEBI:57453"/>
        <dbReference type="ChEBI" id="CHEBI:83100"/>
        <dbReference type="ChEBI" id="CHEBI:83143"/>
        <dbReference type="EC" id="2.1.2.10"/>
    </reaction>
</comment>
<comment type="subunit">
    <text evidence="1">The glycine cleavage system is composed of four proteins: P, T, L and H.</text>
</comment>
<comment type="similarity">
    <text evidence="1">Belongs to the GcvT family.</text>
</comment>
<organism>
    <name type="scientific">Methylococcus capsulatus (strain ATCC 33009 / NCIMB 11132 / Bath)</name>
    <dbReference type="NCBI Taxonomy" id="243233"/>
    <lineage>
        <taxon>Bacteria</taxon>
        <taxon>Pseudomonadati</taxon>
        <taxon>Pseudomonadota</taxon>
        <taxon>Gammaproteobacteria</taxon>
        <taxon>Methylococcales</taxon>
        <taxon>Methylococcaceae</taxon>
        <taxon>Methylococcus</taxon>
    </lineage>
</organism>
<dbReference type="EC" id="2.1.2.10" evidence="1"/>
<dbReference type="EMBL" id="AE017282">
    <property type="protein sequence ID" value="AAU90545.1"/>
    <property type="molecule type" value="Genomic_DNA"/>
</dbReference>
<dbReference type="RefSeq" id="WP_010959711.1">
    <property type="nucleotide sequence ID" value="NC_002977.6"/>
</dbReference>
<dbReference type="SMR" id="Q60BW3"/>
<dbReference type="STRING" id="243233.MCA0350"/>
<dbReference type="GeneID" id="88222691"/>
<dbReference type="KEGG" id="mca:MCA0350"/>
<dbReference type="eggNOG" id="COG0404">
    <property type="taxonomic scope" value="Bacteria"/>
</dbReference>
<dbReference type="HOGENOM" id="CLU_007884_10_2_6"/>
<dbReference type="Proteomes" id="UP000006821">
    <property type="component" value="Chromosome"/>
</dbReference>
<dbReference type="GO" id="GO:0005829">
    <property type="term" value="C:cytosol"/>
    <property type="evidence" value="ECO:0007669"/>
    <property type="project" value="TreeGrafter"/>
</dbReference>
<dbReference type="GO" id="GO:0005960">
    <property type="term" value="C:glycine cleavage complex"/>
    <property type="evidence" value="ECO:0007669"/>
    <property type="project" value="InterPro"/>
</dbReference>
<dbReference type="GO" id="GO:0004047">
    <property type="term" value="F:aminomethyltransferase activity"/>
    <property type="evidence" value="ECO:0007669"/>
    <property type="project" value="UniProtKB-UniRule"/>
</dbReference>
<dbReference type="GO" id="GO:0008483">
    <property type="term" value="F:transaminase activity"/>
    <property type="evidence" value="ECO:0007669"/>
    <property type="project" value="UniProtKB-KW"/>
</dbReference>
<dbReference type="GO" id="GO:0019464">
    <property type="term" value="P:glycine decarboxylation via glycine cleavage system"/>
    <property type="evidence" value="ECO:0007669"/>
    <property type="project" value="UniProtKB-UniRule"/>
</dbReference>
<dbReference type="FunFam" id="3.30.70.1400:FF:000001">
    <property type="entry name" value="Aminomethyltransferase"/>
    <property type="match status" value="1"/>
</dbReference>
<dbReference type="FunFam" id="4.10.1250.10:FF:000001">
    <property type="entry name" value="Aminomethyltransferase"/>
    <property type="match status" value="1"/>
</dbReference>
<dbReference type="Gene3D" id="2.40.30.110">
    <property type="entry name" value="Aminomethyltransferase beta-barrel domains"/>
    <property type="match status" value="1"/>
</dbReference>
<dbReference type="Gene3D" id="3.30.70.1400">
    <property type="entry name" value="Aminomethyltransferase beta-barrel domains"/>
    <property type="match status" value="1"/>
</dbReference>
<dbReference type="Gene3D" id="4.10.1250.10">
    <property type="entry name" value="Aminomethyltransferase fragment"/>
    <property type="match status" value="1"/>
</dbReference>
<dbReference type="Gene3D" id="3.30.1360.120">
    <property type="entry name" value="Probable tRNA modification gtpase trme, domain 1"/>
    <property type="match status" value="1"/>
</dbReference>
<dbReference type="HAMAP" id="MF_00259">
    <property type="entry name" value="GcvT"/>
    <property type="match status" value="1"/>
</dbReference>
<dbReference type="InterPro" id="IPR006223">
    <property type="entry name" value="GCS_T"/>
</dbReference>
<dbReference type="InterPro" id="IPR022903">
    <property type="entry name" value="GCS_T_bac"/>
</dbReference>
<dbReference type="InterPro" id="IPR013977">
    <property type="entry name" value="GCST_C"/>
</dbReference>
<dbReference type="InterPro" id="IPR006222">
    <property type="entry name" value="GCV_T_N"/>
</dbReference>
<dbReference type="InterPro" id="IPR028896">
    <property type="entry name" value="GcvT/YgfZ/DmdA"/>
</dbReference>
<dbReference type="InterPro" id="IPR029043">
    <property type="entry name" value="GcvT/YgfZ_C"/>
</dbReference>
<dbReference type="InterPro" id="IPR027266">
    <property type="entry name" value="TrmE/GcvT_dom1"/>
</dbReference>
<dbReference type="NCBIfam" id="TIGR00528">
    <property type="entry name" value="gcvT"/>
    <property type="match status" value="1"/>
</dbReference>
<dbReference type="NCBIfam" id="NF001567">
    <property type="entry name" value="PRK00389.1"/>
    <property type="match status" value="1"/>
</dbReference>
<dbReference type="PANTHER" id="PTHR43757">
    <property type="entry name" value="AMINOMETHYLTRANSFERASE"/>
    <property type="match status" value="1"/>
</dbReference>
<dbReference type="PANTHER" id="PTHR43757:SF2">
    <property type="entry name" value="AMINOMETHYLTRANSFERASE, MITOCHONDRIAL"/>
    <property type="match status" value="1"/>
</dbReference>
<dbReference type="Pfam" id="PF01571">
    <property type="entry name" value="GCV_T"/>
    <property type="match status" value="1"/>
</dbReference>
<dbReference type="Pfam" id="PF08669">
    <property type="entry name" value="GCV_T_C"/>
    <property type="match status" value="1"/>
</dbReference>
<dbReference type="PIRSF" id="PIRSF006487">
    <property type="entry name" value="GcvT"/>
    <property type="match status" value="1"/>
</dbReference>
<dbReference type="SUPFAM" id="SSF101790">
    <property type="entry name" value="Aminomethyltransferase beta-barrel domain"/>
    <property type="match status" value="1"/>
</dbReference>
<dbReference type="SUPFAM" id="SSF103025">
    <property type="entry name" value="Folate-binding domain"/>
    <property type="match status" value="1"/>
</dbReference>
<evidence type="ECO:0000255" key="1">
    <source>
        <dbReference type="HAMAP-Rule" id="MF_00259"/>
    </source>
</evidence>
<accession>Q60BW3</accession>